<protein>
    <recommendedName>
        <fullName evidence="1">Serine--tRNA ligase</fullName>
        <ecNumber evidence="1">6.1.1.11</ecNumber>
    </recommendedName>
    <alternativeName>
        <fullName evidence="1">Seryl-tRNA synthetase</fullName>
        <shortName evidence="1">SerRS</shortName>
    </alternativeName>
    <alternativeName>
        <fullName evidence="1">Seryl-tRNA(Ser/Sec) synthetase</fullName>
    </alternativeName>
</protein>
<dbReference type="EC" id="6.1.1.11" evidence="1"/>
<dbReference type="EMBL" id="AP006628">
    <property type="protein sequence ID" value="BAD04168.1"/>
    <property type="molecule type" value="Genomic_DNA"/>
</dbReference>
<dbReference type="SMR" id="Q6YRD2"/>
<dbReference type="STRING" id="262768.PAM_083"/>
<dbReference type="KEGG" id="poy:PAM_083"/>
<dbReference type="eggNOG" id="COG0172">
    <property type="taxonomic scope" value="Bacteria"/>
</dbReference>
<dbReference type="HOGENOM" id="CLU_023797_1_1_14"/>
<dbReference type="BioCyc" id="OYEL262768:G1G26-112-MONOMER"/>
<dbReference type="UniPathway" id="UPA00906">
    <property type="reaction ID" value="UER00895"/>
</dbReference>
<dbReference type="Proteomes" id="UP000002523">
    <property type="component" value="Chromosome"/>
</dbReference>
<dbReference type="GO" id="GO:0005737">
    <property type="term" value="C:cytoplasm"/>
    <property type="evidence" value="ECO:0007669"/>
    <property type="project" value="UniProtKB-SubCell"/>
</dbReference>
<dbReference type="GO" id="GO:0005524">
    <property type="term" value="F:ATP binding"/>
    <property type="evidence" value="ECO:0007669"/>
    <property type="project" value="UniProtKB-UniRule"/>
</dbReference>
<dbReference type="GO" id="GO:0004828">
    <property type="term" value="F:serine-tRNA ligase activity"/>
    <property type="evidence" value="ECO:0007669"/>
    <property type="project" value="UniProtKB-UniRule"/>
</dbReference>
<dbReference type="GO" id="GO:0016260">
    <property type="term" value="P:selenocysteine biosynthetic process"/>
    <property type="evidence" value="ECO:0007669"/>
    <property type="project" value="UniProtKB-UniRule"/>
</dbReference>
<dbReference type="GO" id="GO:0006434">
    <property type="term" value="P:seryl-tRNA aminoacylation"/>
    <property type="evidence" value="ECO:0007669"/>
    <property type="project" value="UniProtKB-UniRule"/>
</dbReference>
<dbReference type="CDD" id="cd00770">
    <property type="entry name" value="SerRS_core"/>
    <property type="match status" value="1"/>
</dbReference>
<dbReference type="Gene3D" id="3.30.930.10">
    <property type="entry name" value="Bira Bifunctional Protein, Domain 2"/>
    <property type="match status" value="1"/>
</dbReference>
<dbReference type="Gene3D" id="1.10.287.40">
    <property type="entry name" value="Serine-tRNA synthetase, tRNA binding domain"/>
    <property type="match status" value="1"/>
</dbReference>
<dbReference type="HAMAP" id="MF_00176">
    <property type="entry name" value="Ser_tRNA_synth_type1"/>
    <property type="match status" value="1"/>
</dbReference>
<dbReference type="InterPro" id="IPR002314">
    <property type="entry name" value="aa-tRNA-synt_IIb"/>
</dbReference>
<dbReference type="InterPro" id="IPR006195">
    <property type="entry name" value="aa-tRNA-synth_II"/>
</dbReference>
<dbReference type="InterPro" id="IPR045864">
    <property type="entry name" value="aa-tRNA-synth_II/BPL/LPL"/>
</dbReference>
<dbReference type="InterPro" id="IPR002317">
    <property type="entry name" value="Ser-tRNA-ligase_type_1"/>
</dbReference>
<dbReference type="InterPro" id="IPR015866">
    <property type="entry name" value="Ser-tRNA-synth_1_N"/>
</dbReference>
<dbReference type="InterPro" id="IPR042103">
    <property type="entry name" value="SerRS_1_N_sf"/>
</dbReference>
<dbReference type="InterPro" id="IPR033729">
    <property type="entry name" value="SerRS_core"/>
</dbReference>
<dbReference type="InterPro" id="IPR010978">
    <property type="entry name" value="tRNA-bd_arm"/>
</dbReference>
<dbReference type="NCBIfam" id="TIGR00414">
    <property type="entry name" value="serS"/>
    <property type="match status" value="1"/>
</dbReference>
<dbReference type="PANTHER" id="PTHR43697:SF1">
    <property type="entry name" value="SERINE--TRNA LIGASE"/>
    <property type="match status" value="1"/>
</dbReference>
<dbReference type="PANTHER" id="PTHR43697">
    <property type="entry name" value="SERYL-TRNA SYNTHETASE"/>
    <property type="match status" value="1"/>
</dbReference>
<dbReference type="Pfam" id="PF02403">
    <property type="entry name" value="Seryl_tRNA_N"/>
    <property type="match status" value="1"/>
</dbReference>
<dbReference type="Pfam" id="PF00587">
    <property type="entry name" value="tRNA-synt_2b"/>
    <property type="match status" value="1"/>
</dbReference>
<dbReference type="PIRSF" id="PIRSF001529">
    <property type="entry name" value="Ser-tRNA-synth_IIa"/>
    <property type="match status" value="1"/>
</dbReference>
<dbReference type="PRINTS" id="PR00981">
    <property type="entry name" value="TRNASYNTHSER"/>
</dbReference>
<dbReference type="SUPFAM" id="SSF55681">
    <property type="entry name" value="Class II aaRS and biotin synthetases"/>
    <property type="match status" value="1"/>
</dbReference>
<dbReference type="SUPFAM" id="SSF46589">
    <property type="entry name" value="tRNA-binding arm"/>
    <property type="match status" value="1"/>
</dbReference>
<dbReference type="PROSITE" id="PS50862">
    <property type="entry name" value="AA_TRNA_LIGASE_II"/>
    <property type="match status" value="1"/>
</dbReference>
<reference key="1">
    <citation type="journal article" date="2004" name="Nat. Genet.">
        <title>Reductive evolution suggested from the complete genome sequence of a plant-pathogenic phytoplasma.</title>
        <authorList>
            <person name="Oshima K."/>
            <person name="Kakizawa S."/>
            <person name="Nishigawa H."/>
            <person name="Jung H.-Y."/>
            <person name="Wei W."/>
            <person name="Suzuki S."/>
            <person name="Arashida R."/>
            <person name="Nakata D."/>
            <person name="Miyata S."/>
            <person name="Ugaki M."/>
            <person name="Namba S."/>
        </authorList>
    </citation>
    <scope>NUCLEOTIDE SEQUENCE [LARGE SCALE GENOMIC DNA]</scope>
    <source>
        <strain>OY-M</strain>
    </source>
</reference>
<organism>
    <name type="scientific">Onion yellows phytoplasma (strain OY-M)</name>
    <dbReference type="NCBI Taxonomy" id="262768"/>
    <lineage>
        <taxon>Bacteria</taxon>
        <taxon>Bacillati</taxon>
        <taxon>Mycoplasmatota</taxon>
        <taxon>Mollicutes</taxon>
        <taxon>Acholeplasmatales</taxon>
        <taxon>Acholeplasmataceae</taxon>
        <taxon>Candidatus Phytoplasma</taxon>
        <taxon>16SrI (Aster yellows group)</taxon>
    </lineage>
</organism>
<evidence type="ECO:0000255" key="1">
    <source>
        <dbReference type="HAMAP-Rule" id="MF_00176"/>
    </source>
</evidence>
<feature type="chain" id="PRO_0000122094" description="Serine--tRNA ligase">
    <location>
        <begin position="1"/>
        <end position="424"/>
    </location>
</feature>
<feature type="binding site" evidence="1">
    <location>
        <begin position="232"/>
        <end position="234"/>
    </location>
    <ligand>
        <name>L-serine</name>
        <dbReference type="ChEBI" id="CHEBI:33384"/>
    </ligand>
</feature>
<feature type="binding site" evidence="1">
    <location>
        <begin position="263"/>
        <end position="265"/>
    </location>
    <ligand>
        <name>ATP</name>
        <dbReference type="ChEBI" id="CHEBI:30616"/>
    </ligand>
</feature>
<feature type="binding site" evidence="1">
    <location>
        <position position="286"/>
    </location>
    <ligand>
        <name>L-serine</name>
        <dbReference type="ChEBI" id="CHEBI:33384"/>
    </ligand>
</feature>
<feature type="binding site" evidence="1">
    <location>
        <begin position="350"/>
        <end position="353"/>
    </location>
    <ligand>
        <name>ATP</name>
        <dbReference type="ChEBI" id="CHEBI:30616"/>
    </ligand>
</feature>
<feature type="binding site" evidence="1">
    <location>
        <position position="386"/>
    </location>
    <ligand>
        <name>L-serine</name>
        <dbReference type="ChEBI" id="CHEBI:33384"/>
    </ligand>
</feature>
<gene>
    <name evidence="1" type="primary">serS</name>
    <name type="ordered locus">PAM_083</name>
</gene>
<proteinExistence type="inferred from homology"/>
<accession>Q6YRD2</accession>
<comment type="function">
    <text evidence="1">Catalyzes the attachment of serine to tRNA(Ser). Is also able to aminoacylate tRNA(Sec) with serine, to form the misacylated tRNA L-seryl-tRNA(Sec), which will be further converted into selenocysteinyl-tRNA(Sec).</text>
</comment>
<comment type="catalytic activity">
    <reaction evidence="1">
        <text>tRNA(Ser) + L-serine + ATP = L-seryl-tRNA(Ser) + AMP + diphosphate + H(+)</text>
        <dbReference type="Rhea" id="RHEA:12292"/>
        <dbReference type="Rhea" id="RHEA-COMP:9669"/>
        <dbReference type="Rhea" id="RHEA-COMP:9703"/>
        <dbReference type="ChEBI" id="CHEBI:15378"/>
        <dbReference type="ChEBI" id="CHEBI:30616"/>
        <dbReference type="ChEBI" id="CHEBI:33019"/>
        <dbReference type="ChEBI" id="CHEBI:33384"/>
        <dbReference type="ChEBI" id="CHEBI:78442"/>
        <dbReference type="ChEBI" id="CHEBI:78533"/>
        <dbReference type="ChEBI" id="CHEBI:456215"/>
        <dbReference type="EC" id="6.1.1.11"/>
    </reaction>
</comment>
<comment type="catalytic activity">
    <reaction evidence="1">
        <text>tRNA(Sec) + L-serine + ATP = L-seryl-tRNA(Sec) + AMP + diphosphate + H(+)</text>
        <dbReference type="Rhea" id="RHEA:42580"/>
        <dbReference type="Rhea" id="RHEA-COMP:9742"/>
        <dbReference type="Rhea" id="RHEA-COMP:10128"/>
        <dbReference type="ChEBI" id="CHEBI:15378"/>
        <dbReference type="ChEBI" id="CHEBI:30616"/>
        <dbReference type="ChEBI" id="CHEBI:33019"/>
        <dbReference type="ChEBI" id="CHEBI:33384"/>
        <dbReference type="ChEBI" id="CHEBI:78442"/>
        <dbReference type="ChEBI" id="CHEBI:78533"/>
        <dbReference type="ChEBI" id="CHEBI:456215"/>
        <dbReference type="EC" id="6.1.1.11"/>
    </reaction>
</comment>
<comment type="pathway">
    <text evidence="1">Aminoacyl-tRNA biosynthesis; selenocysteinyl-tRNA(Sec) biosynthesis; L-seryl-tRNA(Sec) from L-serine and tRNA(Sec): step 1/1.</text>
</comment>
<comment type="subunit">
    <text evidence="1">Homodimer. The tRNA molecule binds across the dimer.</text>
</comment>
<comment type="subcellular location">
    <subcellularLocation>
        <location evidence="1">Cytoplasm</location>
    </subcellularLocation>
</comment>
<comment type="domain">
    <text evidence="1">Consists of two distinct domains, a catalytic core and a N-terminal extension that is involved in tRNA binding.</text>
</comment>
<comment type="similarity">
    <text evidence="1">Belongs to the class-II aminoacyl-tRNA synthetase family. Type-1 seryl-tRNA synthetase subfamily.</text>
</comment>
<keyword id="KW-0030">Aminoacyl-tRNA synthetase</keyword>
<keyword id="KW-0067">ATP-binding</keyword>
<keyword id="KW-0963">Cytoplasm</keyword>
<keyword id="KW-0436">Ligase</keyword>
<keyword id="KW-0547">Nucleotide-binding</keyword>
<keyword id="KW-0648">Protein biosynthesis</keyword>
<name>SYS_ONYPE</name>
<sequence>MLDLNFVVQNLPSVIAKLEKRQQNFAYLNKLPLLAQQRKSLLLEIQDLRSQKNQSAKKVAQKANAKEDITLVLQDTNFLRDDLQKLEQKLKLKEQEIFDILSITPNLPHDSLPIGTNDKDNKELYCAGQIRTFAFTPKDHVYLAEKLDILDFKRASKISGSGFVVCKGLGARLERALIQFMMDLHNKKGYQEIIPPYIINEKSMFATGQLPKFEDEVYKLYNSKNNWYLNPTAEVPTINLHREEIFKPDTLPIKYVAYTTAFRQEAGSAGKDTRGIFRQHQFNKVELIQFCHPQNSYECLDQMLKDSEEVLKLLKLPYRVVLLSTGDLGFSMAKTYDLEVFLPSYNCYREIGSISNSCDFQARRANIKMKNPANNKNEYVHILNGSGLAVGRTVIAILENYQNQDGTITVPEVLQPYLGTDIIK</sequence>